<keyword id="KW-0044">Antibiotic</keyword>
<keyword id="KW-0929">Antimicrobial</keyword>
<keyword id="KW-0204">Cytolysis</keyword>
<keyword id="KW-0295">Fungicide</keyword>
<keyword id="KW-0354">Hemolysis</keyword>
<keyword id="KW-0406">Ion transport</keyword>
<keyword id="KW-0472">Membrane</keyword>
<keyword id="KW-0964">Secreted</keyword>
<keyword id="KW-0732">Signal</keyword>
<keyword id="KW-1052">Target cell membrane</keyword>
<keyword id="KW-1053">Target membrane</keyword>
<keyword id="KW-0812">Transmembrane</keyword>
<keyword id="KW-0813">Transport</keyword>
<reference key="1">
    <citation type="journal article" date="2009" name="Toxicon">
        <title>Cloning and characterization of cDNA sequences encoding for new venom peptides of the Brazilian scorpion Opisthacanthus cayaporum.</title>
        <authorList>
            <person name="Silva E.C."/>
            <person name="Camargos T.S."/>
            <person name="Maranhao A.Q."/>
            <person name="Silva-Pereira I."/>
            <person name="Silva L.P."/>
            <person name="Possani L.D."/>
            <person name="Schwartz E.F."/>
        </authorList>
    </citation>
    <scope>NUCLEOTIDE SEQUENCE [MRNA]</scope>
    <source>
        <tissue>Venom gland</tissue>
    </source>
</reference>
<sequence>MNRKLLLVFLVVAMLVMQPAEAGFWSKIKDFAKKAWNSPLANELKSKALNAAKNFVSEKIGATPSEAGQIPFDEFMDVLYS</sequence>
<accession>C7C1L2</accession>
<protein>
    <recommendedName>
        <fullName evidence="3">Probable antimicrobial peptide Con13</fullName>
    </recommendedName>
</protein>
<organism>
    <name type="scientific">Opisthacanthus cayaporum</name>
    <name type="common">South American scorpion</name>
    <dbReference type="NCBI Taxonomy" id="573324"/>
    <lineage>
        <taxon>Eukaryota</taxon>
        <taxon>Metazoa</taxon>
        <taxon>Ecdysozoa</taxon>
        <taxon>Arthropoda</taxon>
        <taxon>Chelicerata</taxon>
        <taxon>Arachnida</taxon>
        <taxon>Scorpiones</taxon>
        <taxon>Iurida</taxon>
        <taxon>Scorpionoidea</taxon>
        <taxon>Hemiscorpiidae</taxon>
        <taxon>Opisthacanthus</taxon>
    </lineage>
</organism>
<name>NDB2_OPICY</name>
<proteinExistence type="inferred from homology"/>
<evidence type="ECO:0000250" key="1">
    <source>
        <dbReference type="UniProtKB" id="P83313"/>
    </source>
</evidence>
<evidence type="ECO:0000255" key="2"/>
<evidence type="ECO:0000303" key="3">
    <source>
    </source>
</evidence>
<evidence type="ECO:0000305" key="4"/>
<evidence type="ECO:0000305" key="5">
    <source>
    </source>
</evidence>
<dbReference type="EMBL" id="FM998759">
    <property type="protein sequence ID" value="CAX51404.1"/>
    <property type="molecule type" value="mRNA"/>
</dbReference>
<dbReference type="GO" id="GO:0005576">
    <property type="term" value="C:extracellular region"/>
    <property type="evidence" value="ECO:0007669"/>
    <property type="project" value="UniProtKB-SubCell"/>
</dbReference>
<dbReference type="GO" id="GO:0016020">
    <property type="term" value="C:membrane"/>
    <property type="evidence" value="ECO:0007669"/>
    <property type="project" value="UniProtKB-KW"/>
</dbReference>
<dbReference type="GO" id="GO:0044218">
    <property type="term" value="C:other organism cell membrane"/>
    <property type="evidence" value="ECO:0007669"/>
    <property type="project" value="UniProtKB-KW"/>
</dbReference>
<dbReference type="GO" id="GO:0042742">
    <property type="term" value="P:defense response to bacterium"/>
    <property type="evidence" value="ECO:0007669"/>
    <property type="project" value="UniProtKB-KW"/>
</dbReference>
<dbReference type="GO" id="GO:0050832">
    <property type="term" value="P:defense response to fungus"/>
    <property type="evidence" value="ECO:0007669"/>
    <property type="project" value="UniProtKB-KW"/>
</dbReference>
<dbReference type="GO" id="GO:0044179">
    <property type="term" value="P:hemolysis in another organism"/>
    <property type="evidence" value="ECO:0007669"/>
    <property type="project" value="InterPro"/>
</dbReference>
<dbReference type="GO" id="GO:0006811">
    <property type="term" value="P:monoatomic ion transport"/>
    <property type="evidence" value="ECO:0007669"/>
    <property type="project" value="UniProtKB-KW"/>
</dbReference>
<dbReference type="InterPro" id="IPR012526">
    <property type="entry name" value="Antimicrobial_7"/>
</dbReference>
<dbReference type="Pfam" id="PF08102">
    <property type="entry name" value="Antimicrobial_7"/>
    <property type="match status" value="1"/>
</dbReference>
<feature type="signal peptide" evidence="2">
    <location>
        <begin position="1"/>
        <end position="22"/>
    </location>
</feature>
<feature type="chain" id="PRO_5000502070" description="Probable antimicrobial peptide Con13" evidence="5">
    <location>
        <begin position="23"/>
        <end position="65"/>
    </location>
</feature>
<feature type="propeptide" id="PRO_5000502071" evidence="1">
    <location>
        <begin position="66"/>
        <end position="81"/>
    </location>
</feature>
<comment type="function">
    <text evidence="1">At high concentrations, acts as a pore former in cellular membranes and causes the leakage of the cells. At submicromolar concentrations, degranulates granulocytes and has a weak hemolytic activity against human erythrocytes. Also strongly inhibits the production of superoxide anions. Has a strong antibacterial activity against Gram-negative bacteria but is less active against Gram-positive bacteria. Also has antifungal activity.</text>
</comment>
<comment type="subcellular location">
    <subcellularLocation>
        <location evidence="1">Secreted</location>
    </subcellularLocation>
    <subcellularLocation>
        <location evidence="1">Target cell membrane</location>
    </subcellularLocation>
    <text evidence="1">Forms a helical membrane channel in the prey.</text>
</comment>
<comment type="tissue specificity">
    <text evidence="5">Expressed by the venom gland.</text>
</comment>
<comment type="similarity">
    <text evidence="4">Belongs to the non-disulfide-bridged peptide (NDBP) superfamily. Long chain multifunctional peptide (group 2) family.</text>
</comment>